<name>PE2R1_MOUSE</name>
<organism>
    <name type="scientific">Mus musculus</name>
    <name type="common">Mouse</name>
    <dbReference type="NCBI Taxonomy" id="10090"/>
    <lineage>
        <taxon>Eukaryota</taxon>
        <taxon>Metazoa</taxon>
        <taxon>Chordata</taxon>
        <taxon>Craniata</taxon>
        <taxon>Vertebrata</taxon>
        <taxon>Euteleostomi</taxon>
        <taxon>Mammalia</taxon>
        <taxon>Eutheria</taxon>
        <taxon>Euarchontoglires</taxon>
        <taxon>Glires</taxon>
        <taxon>Rodentia</taxon>
        <taxon>Myomorpha</taxon>
        <taxon>Muroidea</taxon>
        <taxon>Muridae</taxon>
        <taxon>Murinae</taxon>
        <taxon>Mus</taxon>
        <taxon>Mus</taxon>
    </lineage>
</organism>
<gene>
    <name type="primary">Ptger1</name>
    <name type="synonym">Ptgerep1</name>
</gene>
<feature type="chain" id="PRO_0000070051" description="Prostaglandin E2 receptor EP1 subtype">
    <location>
        <begin position="1"/>
        <end position="405"/>
    </location>
</feature>
<feature type="topological domain" description="Extracellular" evidence="1">
    <location>
        <begin position="1"/>
        <end position="39"/>
    </location>
</feature>
<feature type="transmembrane region" description="Helical; Name=1" evidence="1">
    <location>
        <begin position="40"/>
        <end position="62"/>
    </location>
</feature>
<feature type="topological domain" description="Cytoplasmic" evidence="1">
    <location>
        <begin position="63"/>
        <end position="80"/>
    </location>
</feature>
<feature type="transmembrane region" description="Helical; Name=2" evidence="1">
    <location>
        <begin position="81"/>
        <end position="99"/>
    </location>
</feature>
<feature type="topological domain" description="Extracellular" evidence="1">
    <location>
        <begin position="100"/>
        <end position="113"/>
    </location>
</feature>
<feature type="transmembrane region" description="Helical; Name=3" evidence="1">
    <location>
        <begin position="114"/>
        <end position="135"/>
    </location>
</feature>
<feature type="topological domain" description="Cytoplasmic" evidence="1">
    <location>
        <begin position="136"/>
        <end position="157"/>
    </location>
</feature>
<feature type="transmembrane region" description="Helical; Name=4" evidence="1">
    <location>
        <begin position="158"/>
        <end position="179"/>
    </location>
</feature>
<feature type="topological domain" description="Extracellular" evidence="1">
    <location>
        <begin position="180"/>
        <end position="202"/>
    </location>
</feature>
<feature type="transmembrane region" description="Helical; Name=5" evidence="1">
    <location>
        <begin position="203"/>
        <end position="228"/>
    </location>
</feature>
<feature type="topological domain" description="Cytoplasmic" evidence="1">
    <location>
        <begin position="229"/>
        <end position="301"/>
    </location>
</feature>
<feature type="transmembrane region" description="Helical; Name=6" evidence="1">
    <location>
        <begin position="302"/>
        <end position="323"/>
    </location>
</feature>
<feature type="topological domain" description="Extracellular" evidence="1">
    <location>
        <begin position="324"/>
        <end position="337"/>
    </location>
</feature>
<feature type="transmembrane region" description="Helical; Name=7" evidence="1">
    <location>
        <begin position="338"/>
        <end position="357"/>
    </location>
</feature>
<feature type="topological domain" description="Cytoplasmic" evidence="1">
    <location>
        <begin position="358"/>
        <end position="405"/>
    </location>
</feature>
<feature type="region of interest" description="Disordered" evidence="3">
    <location>
        <begin position="243"/>
        <end position="287"/>
    </location>
</feature>
<feature type="compositionally biased region" description="Low complexity" evidence="3">
    <location>
        <begin position="262"/>
        <end position="282"/>
    </location>
</feature>
<feature type="glycosylation site" description="N-linked (GlcNAc...) asparagine" evidence="1">
    <location>
        <position position="7"/>
    </location>
</feature>
<feature type="glycosylation site" description="N-linked (GlcNAc...) asparagine" evidence="1">
    <location>
        <position position="24"/>
    </location>
</feature>
<feature type="glycosylation site" description="N-linked (GlcNAc...) asparagine" evidence="1">
    <location>
        <position position="34"/>
    </location>
</feature>
<feature type="disulfide bond" evidence="2">
    <location>
        <begin position="112"/>
        <end position="190"/>
    </location>
</feature>
<proteinExistence type="evidence at transcript level"/>
<accession>P35375</accession>
<dbReference type="EMBL" id="D16338">
    <property type="protein sequence ID" value="BAA03842.1"/>
    <property type="molecule type" value="mRNA"/>
</dbReference>
<dbReference type="EMBL" id="Z49987">
    <property type="protein sequence ID" value="CAA90278.1"/>
    <property type="molecule type" value="Genomic_DNA"/>
</dbReference>
<dbReference type="EMBL" id="Y07611">
    <property type="protein sequence ID" value="CAA68884.1"/>
    <property type="molecule type" value="Genomic_DNA"/>
</dbReference>
<dbReference type="CCDS" id="CCDS22458.1"/>
<dbReference type="PIR" id="S66525">
    <property type="entry name" value="S66525"/>
</dbReference>
<dbReference type="RefSeq" id="NP_038669.1">
    <property type="nucleotide sequence ID" value="NM_013641.3"/>
</dbReference>
<dbReference type="SMR" id="P35375"/>
<dbReference type="BioGRID" id="202454">
    <property type="interactions" value="1"/>
</dbReference>
<dbReference type="CORUM" id="P35375"/>
<dbReference type="FunCoup" id="P35375">
    <property type="interactions" value="1210"/>
</dbReference>
<dbReference type="STRING" id="10090.ENSMUSP00000019608"/>
<dbReference type="BindingDB" id="P35375"/>
<dbReference type="ChEMBL" id="CHEMBL2181"/>
<dbReference type="DrugCentral" id="P35375"/>
<dbReference type="GuidetoPHARMACOLOGY" id="340"/>
<dbReference type="GlyCosmos" id="P35375">
    <property type="glycosylation" value="3 sites, No reported glycans"/>
</dbReference>
<dbReference type="GlyGen" id="P35375">
    <property type="glycosylation" value="3 sites, 1 N-linked glycan (1 site)"/>
</dbReference>
<dbReference type="iPTMnet" id="P35375"/>
<dbReference type="PhosphoSitePlus" id="P35375"/>
<dbReference type="PaxDb" id="10090-ENSMUSP00000019608"/>
<dbReference type="Antibodypedia" id="13701">
    <property type="antibodies" value="255 antibodies from 31 providers"/>
</dbReference>
<dbReference type="DNASU" id="19216"/>
<dbReference type="Ensembl" id="ENSMUST00000019608.7">
    <property type="protein sequence ID" value="ENSMUSP00000019608.6"/>
    <property type="gene ID" value="ENSMUSG00000019464.7"/>
</dbReference>
<dbReference type="GeneID" id="19216"/>
<dbReference type="KEGG" id="mmu:19216"/>
<dbReference type="UCSC" id="uc009mkt.1">
    <property type="organism name" value="mouse"/>
</dbReference>
<dbReference type="AGR" id="MGI:97793"/>
<dbReference type="CTD" id="5731"/>
<dbReference type="MGI" id="MGI:97793">
    <property type="gene designation" value="Ptger1"/>
</dbReference>
<dbReference type="VEuPathDB" id="HostDB:ENSMUSG00000019464"/>
<dbReference type="eggNOG" id="KOG3656">
    <property type="taxonomic scope" value="Eukaryota"/>
</dbReference>
<dbReference type="GeneTree" id="ENSGT01030000234559"/>
<dbReference type="HOGENOM" id="CLU_045991_3_0_1"/>
<dbReference type="InParanoid" id="P35375"/>
<dbReference type="OMA" id="GMCQFLG"/>
<dbReference type="OrthoDB" id="5959154at2759"/>
<dbReference type="PhylomeDB" id="P35375"/>
<dbReference type="TreeFam" id="TF324982"/>
<dbReference type="Reactome" id="R-MMU-391908">
    <property type="pathway name" value="Prostanoid ligand receptors"/>
</dbReference>
<dbReference type="Reactome" id="R-MMU-416476">
    <property type="pathway name" value="G alpha (q) signalling events"/>
</dbReference>
<dbReference type="BioGRID-ORCS" id="19216">
    <property type="hits" value="1 hit in 78 CRISPR screens"/>
</dbReference>
<dbReference type="ChiTaRS" id="Ptger1">
    <property type="organism name" value="mouse"/>
</dbReference>
<dbReference type="PRO" id="PR:P35375"/>
<dbReference type="Proteomes" id="UP000000589">
    <property type="component" value="Chromosome 8"/>
</dbReference>
<dbReference type="RNAct" id="P35375">
    <property type="molecule type" value="protein"/>
</dbReference>
<dbReference type="Bgee" id="ENSMUSG00000019464">
    <property type="expression patterns" value="Expressed in lumbar dorsal root ganglion and 80 other cell types or tissues"/>
</dbReference>
<dbReference type="ExpressionAtlas" id="P35375">
    <property type="expression patterns" value="baseline and differential"/>
</dbReference>
<dbReference type="GO" id="GO:0005886">
    <property type="term" value="C:plasma membrane"/>
    <property type="evidence" value="ECO:0007669"/>
    <property type="project" value="UniProtKB-SubCell"/>
</dbReference>
<dbReference type="GO" id="GO:0031748">
    <property type="term" value="F:D1 dopamine receptor binding"/>
    <property type="evidence" value="ECO:0000353"/>
    <property type="project" value="UniProtKB"/>
</dbReference>
<dbReference type="GO" id="GO:0004957">
    <property type="term" value="F:prostaglandin E receptor activity"/>
    <property type="evidence" value="ECO:0007669"/>
    <property type="project" value="Ensembl"/>
</dbReference>
<dbReference type="GO" id="GO:0007191">
    <property type="term" value="P:adenylate cyclase-activating dopamine receptor signaling pathway"/>
    <property type="evidence" value="ECO:0000314"/>
    <property type="project" value="UniProtKB"/>
</dbReference>
<dbReference type="GO" id="GO:0032496">
    <property type="term" value="P:response to lipopolysaccharide"/>
    <property type="evidence" value="ECO:0000315"/>
    <property type="project" value="MGI"/>
</dbReference>
<dbReference type="GO" id="GO:0034695">
    <property type="term" value="P:response to prostaglandin E"/>
    <property type="evidence" value="ECO:0007669"/>
    <property type="project" value="Ensembl"/>
</dbReference>
<dbReference type="FunFam" id="1.20.1070.10:FF:000253">
    <property type="entry name" value="prostaglandin E2 receptor EP1 subtype"/>
    <property type="match status" value="1"/>
</dbReference>
<dbReference type="Gene3D" id="1.20.1070.10">
    <property type="entry name" value="Rhodopsin 7-helix transmembrane proteins"/>
    <property type="match status" value="1"/>
</dbReference>
<dbReference type="InterPro" id="IPR000276">
    <property type="entry name" value="GPCR_Rhodpsn"/>
</dbReference>
<dbReference type="InterPro" id="IPR017452">
    <property type="entry name" value="GPCR_Rhodpsn_7TM"/>
</dbReference>
<dbReference type="InterPro" id="IPR008365">
    <property type="entry name" value="Prostanoid_rcpt"/>
</dbReference>
<dbReference type="InterPro" id="IPR001244">
    <property type="entry name" value="Prostglndn_DP_rcpt"/>
</dbReference>
<dbReference type="InterPro" id="IPR000708">
    <property type="entry name" value="Prostglndn_EP1_rcpt"/>
</dbReference>
<dbReference type="PANTHER" id="PTHR11866">
    <property type="entry name" value="G-PROTEIN COUPLED RECEPTOR FAMILY 1 MEMBER"/>
    <property type="match status" value="1"/>
</dbReference>
<dbReference type="PANTHER" id="PTHR11866:SF3">
    <property type="entry name" value="PROSTAGLANDIN E2 RECEPTOR EP1 SUBTYPE"/>
    <property type="match status" value="1"/>
</dbReference>
<dbReference type="Pfam" id="PF00001">
    <property type="entry name" value="7tm_1"/>
    <property type="match status" value="1"/>
</dbReference>
<dbReference type="PRINTS" id="PR00428">
    <property type="entry name" value="PROSTAGLNDNR"/>
</dbReference>
<dbReference type="PRINTS" id="PR01788">
    <property type="entry name" value="PROSTANOIDR"/>
</dbReference>
<dbReference type="PRINTS" id="PR00580">
    <property type="entry name" value="PRSTNOIDEP1R"/>
</dbReference>
<dbReference type="SUPFAM" id="SSF81321">
    <property type="entry name" value="Family A G protein-coupled receptor-like"/>
    <property type="match status" value="1"/>
</dbReference>
<dbReference type="PROSITE" id="PS00237">
    <property type="entry name" value="G_PROTEIN_RECEP_F1_1"/>
    <property type="match status" value="1"/>
</dbReference>
<dbReference type="PROSITE" id="PS50262">
    <property type="entry name" value="G_PROTEIN_RECEP_F1_2"/>
    <property type="match status" value="1"/>
</dbReference>
<reference key="1">
    <citation type="journal article" date="1993" name="J. Biol. Chem.">
        <title>Cloning and expression of cDNA for a mouse EP1 subtype of prostaglandin E receptor.</title>
        <authorList>
            <person name="Watabe A."/>
            <person name="Sugimoto Y."/>
            <person name="Honda A."/>
            <person name="Irie A."/>
            <person name="Namba T."/>
            <person name="Negishi M."/>
            <person name="Ito S."/>
            <person name="Narumiya S."/>
            <person name="Ichikawa A."/>
        </authorList>
    </citation>
    <scope>NUCLEOTIDE SEQUENCE [MRNA]</scope>
    <source>
        <strain>ddY</strain>
        <tissue>Kidney</tissue>
    </source>
</reference>
<reference key="2">
    <citation type="journal article" date="1995" name="Eur. J. Biochem.">
        <title>Molecular characterization of the mouse prostanoid EP1 receptor gene.</title>
        <authorList>
            <person name="Batshake B."/>
            <person name="Nilsson C."/>
            <person name="Sundelin J."/>
        </authorList>
    </citation>
    <scope>NUCLEOTIDE SEQUENCE [GENOMIC DNA]</scope>
    <source>
        <strain>129</strain>
    </source>
</reference>
<reference key="3">
    <citation type="journal article" date="1996" name="Biochem. Biophys. Res. Commun.">
        <title>The mouse genes for the EP1 prostanoid receptor and the PKN protein kinase overlap.</title>
        <authorList>
            <person name="Batshake B."/>
            <person name="Sundelin S."/>
        </authorList>
    </citation>
    <scope>NUCLEOTIDE SEQUENCE [GENOMIC DNA]</scope>
    <source>
        <strain>129</strain>
    </source>
</reference>
<protein>
    <recommendedName>
        <fullName>Prostaglandin E2 receptor EP1 subtype</fullName>
        <shortName>PGE receptor EP1 subtype</shortName>
        <shortName>PGE2 receptor EP1 subtype</shortName>
    </recommendedName>
    <alternativeName>
        <fullName>Prostanoid EP1 receptor</fullName>
    </alternativeName>
</protein>
<evidence type="ECO:0000255" key="1"/>
<evidence type="ECO:0000255" key="2">
    <source>
        <dbReference type="PROSITE-ProRule" id="PRU00521"/>
    </source>
</evidence>
<evidence type="ECO:0000256" key="3">
    <source>
        <dbReference type="SAM" id="MobiDB-lite"/>
    </source>
</evidence>
<evidence type="ECO:0000305" key="4"/>
<sequence length="405" mass="42966">MSPCGLNLSLADEAATCATPRLPNTSVVLPTGDNGTSPALPIFSMTLGAVSNVLALALLAQVAGRMRRRRSAATFLLFVASLLAIDLAGHVIPGALVLRLYTAGRAPAGGACHFLGGCMVFFGLCPLLLGCGMAVERCVGVTQPLIHAARVSVARARLALAVLAAMALAVALLPLVHVGRYELQYPGTWCFISLGPRGGWRQALLAGLFAGLGLAALLAALVCNTLSGLALLRARWRRRRSRRFRKTAGPDDRRRWGSRGPRLASASSASSITSATATLRSSRGGGSARRVHAHDVEMVGQLVGIMVVSCICWSPLLVLVVLAIGGWNSNSLQRPLFLAVRLASWNQILDPWVYILLRQAMLRQLLRLLPLRVSAKGGPTELGLTKSAWEASSLRSSRHSGFSHL</sequence>
<keyword id="KW-1003">Cell membrane</keyword>
<keyword id="KW-1015">Disulfide bond</keyword>
<keyword id="KW-0297">G-protein coupled receptor</keyword>
<keyword id="KW-0325">Glycoprotein</keyword>
<keyword id="KW-0472">Membrane</keyword>
<keyword id="KW-0597">Phosphoprotein</keyword>
<keyword id="KW-0675">Receptor</keyword>
<keyword id="KW-1185">Reference proteome</keyword>
<keyword id="KW-0807">Transducer</keyword>
<keyword id="KW-0812">Transmembrane</keyword>
<keyword id="KW-1133">Transmembrane helix</keyword>
<comment type="function">
    <text>Receptor for prostaglandin E2 (PGE2). The activity of this receptor is mediated by G(q) proteins which activate a phosphatidylinositol-calcium second messenger system. May play a role as an important modulator of renal function. Implicated the smooth muscle contractile response to PGE2 in various tissues.</text>
</comment>
<comment type="subcellular location">
    <subcellularLocation>
        <location>Cell membrane</location>
        <topology>Multi-pass membrane protein</topology>
    </subcellularLocation>
</comment>
<comment type="tissue specificity">
    <text>Abundant in kidney and in a lesser amount in lung.</text>
</comment>
<comment type="PTM">
    <text evidence="4">Phosphorylated.</text>
</comment>
<comment type="similarity">
    <text evidence="2">Belongs to the G-protein coupled receptor 1 family.</text>
</comment>